<feature type="chain" id="PRO_0000000253" description="ABC-type oligopeptide transporter ABCB9">
    <location>
        <begin position="1"/>
        <end position="762"/>
    </location>
</feature>
<feature type="transmembrane region" description="Helical" evidence="3">
    <location>
        <begin position="7"/>
        <end position="27"/>
    </location>
</feature>
<feature type="transmembrane region" description="Helical" evidence="3">
    <location>
        <begin position="47"/>
        <end position="67"/>
    </location>
</feature>
<feature type="transmembrane region" description="Helical" evidence="3">
    <location>
        <begin position="84"/>
        <end position="104"/>
    </location>
</feature>
<feature type="transmembrane region" description="Helical" evidence="3">
    <location>
        <begin position="116"/>
        <end position="136"/>
    </location>
</feature>
<feature type="transmembrane region" description="Helical" evidence="3">
    <location>
        <begin position="181"/>
        <end position="201"/>
    </location>
</feature>
<feature type="transmembrane region" description="Helical" evidence="3">
    <location>
        <begin position="221"/>
        <end position="241"/>
    </location>
</feature>
<feature type="transmembrane region" description="Helical" evidence="3">
    <location>
        <begin position="315"/>
        <end position="335"/>
    </location>
</feature>
<feature type="transmembrane region" description="Helical" evidence="3">
    <location>
        <begin position="412"/>
        <end position="432"/>
    </location>
</feature>
<feature type="domain" description="ABC transmembrane type-1" evidence="3">
    <location>
        <begin position="184"/>
        <end position="467"/>
    </location>
</feature>
<feature type="domain" description="ABC transporter" evidence="2">
    <location>
        <begin position="500"/>
        <end position="736"/>
    </location>
</feature>
<feature type="binding site" evidence="2">
    <location>
        <begin position="535"/>
        <end position="542"/>
    </location>
    <ligand>
        <name>ATP</name>
        <dbReference type="ChEBI" id="CHEBI:30616"/>
    </ligand>
</feature>
<feature type="site" description="Intramolecular salt bridge with Arg-57. Essential for the release from the ER" evidence="1">
    <location>
        <position position="17"/>
    </location>
</feature>
<feature type="site" description="Important for the second trafficking step from the Golgi to the endosomal and lysosomal compartments" evidence="1">
    <location>
        <position position="45"/>
    </location>
</feature>
<feature type="site" description="Important for the second trafficking step from the Golgi to the endosomal and lysosomal compartments" evidence="1">
    <location>
        <position position="49"/>
    </location>
</feature>
<feature type="site" description="Intramolecular salt bridge with Asp-17. Essential for the release from the ER" evidence="1">
    <location>
        <position position="57"/>
    </location>
</feature>
<feature type="splice variant" id="VSP_000032" description="In isoform 2." evidence="7">
    <original>ETGEKG</original>
    <variation>GTRRRL</variation>
    <location>
        <begin position="631"/>
        <end position="636"/>
    </location>
</feature>
<feature type="splice variant" id="VSP_000033" description="In isoform 2." evidence="7">
    <location>
        <begin position="637"/>
        <end position="762"/>
    </location>
</feature>
<feature type="sequence conflict" description="In Ref. 2; AAF89994." evidence="8" ref="2">
    <original>G</original>
    <variation>R</variation>
    <location>
        <position position="67"/>
    </location>
</feature>
<feature type="sequence conflict" description="In Ref. 4; AK020749." evidence="8" ref="4">
    <original>P</original>
    <variation>A</variation>
    <location>
        <position position="513"/>
    </location>
</feature>
<feature type="sequence conflict" description="In Ref. 4; AK020749." evidence="8" ref="4">
    <original>S</original>
    <variation>N</variation>
    <location>
        <position position="524"/>
    </location>
</feature>
<feature type="sequence conflict" description="In Ref. 2; AAF89994." evidence="8" ref="2">
    <original>N</original>
    <variation>S</variation>
    <location>
        <position position="550"/>
    </location>
</feature>
<feature type="sequence conflict" description="In Ref. 4; AK020749." evidence="8" ref="4">
    <original>F</original>
    <variation>L</variation>
    <location>
        <position position="605"/>
    </location>
</feature>
<feature type="helix" evidence="10">
    <location>
        <begin position="170"/>
        <end position="175"/>
    </location>
</feature>
<feature type="helix" evidence="11">
    <location>
        <begin position="178"/>
        <end position="180"/>
    </location>
</feature>
<feature type="helix" evidence="10">
    <location>
        <begin position="181"/>
        <end position="214"/>
    </location>
</feature>
<feature type="helix" evidence="10">
    <location>
        <begin position="217"/>
        <end position="220"/>
    </location>
</feature>
<feature type="helix" evidence="10">
    <location>
        <begin position="222"/>
        <end position="265"/>
    </location>
</feature>
<feature type="strand" evidence="10">
    <location>
        <begin position="266"/>
        <end position="268"/>
    </location>
</feature>
<feature type="helix" evidence="10">
    <location>
        <begin position="270"/>
        <end position="273"/>
    </location>
</feature>
<feature type="helix" evidence="10">
    <location>
        <begin position="278"/>
        <end position="318"/>
    </location>
</feature>
<feature type="helix" evidence="10">
    <location>
        <begin position="325"/>
        <end position="328"/>
    </location>
</feature>
<feature type="turn" evidence="10">
    <location>
        <begin position="329"/>
        <end position="331"/>
    </location>
</feature>
<feature type="helix" evidence="10">
    <location>
        <begin position="332"/>
        <end position="338"/>
    </location>
</feature>
<feature type="turn" evidence="10">
    <location>
        <begin position="339"/>
        <end position="344"/>
    </location>
</feature>
<feature type="helix" evidence="10">
    <location>
        <begin position="345"/>
        <end position="357"/>
    </location>
</feature>
<feature type="strand" evidence="10">
    <location>
        <begin position="358"/>
        <end position="362"/>
    </location>
</feature>
<feature type="turn" evidence="10">
    <location>
        <begin position="363"/>
        <end position="373"/>
    </location>
</feature>
<feature type="strand" evidence="10">
    <location>
        <begin position="374"/>
        <end position="378"/>
    </location>
</feature>
<feature type="turn" evidence="10">
    <location>
        <begin position="379"/>
        <end position="384"/>
    </location>
</feature>
<feature type="helix" evidence="10">
    <location>
        <begin position="385"/>
        <end position="400"/>
    </location>
</feature>
<feature type="helix" evidence="10">
    <location>
        <begin position="402"/>
        <end position="431"/>
    </location>
</feature>
<feature type="turn" evidence="10">
    <location>
        <begin position="432"/>
        <end position="434"/>
    </location>
</feature>
<feature type="helix" evidence="10">
    <location>
        <begin position="437"/>
        <end position="454"/>
    </location>
</feature>
<feature type="turn" evidence="10">
    <location>
        <begin position="455"/>
        <end position="460"/>
    </location>
</feature>
<feature type="helix" evidence="10">
    <location>
        <begin position="461"/>
        <end position="471"/>
    </location>
</feature>
<feature type="turn" evidence="10">
    <location>
        <begin position="472"/>
        <end position="474"/>
    </location>
</feature>
<feature type="helix" evidence="10">
    <location>
        <begin position="475"/>
        <end position="478"/>
    </location>
</feature>
<feature type="strand" evidence="10">
    <location>
        <begin position="500"/>
        <end position="507"/>
    </location>
</feature>
<feature type="strand" evidence="10">
    <location>
        <begin position="517"/>
        <end position="525"/>
    </location>
</feature>
<feature type="strand" evidence="10">
    <location>
        <begin position="531"/>
        <end position="534"/>
    </location>
</feature>
<feature type="strand" evidence="10">
    <location>
        <begin position="536"/>
        <end position="541"/>
    </location>
</feature>
<feature type="helix" evidence="10">
    <location>
        <begin position="542"/>
        <end position="544"/>
    </location>
</feature>
<feature type="turn" evidence="10">
    <location>
        <begin position="545"/>
        <end position="550"/>
    </location>
</feature>
<feature type="strand" evidence="10">
    <location>
        <begin position="558"/>
        <end position="561"/>
    </location>
</feature>
<feature type="helix" evidence="10">
    <location>
        <begin position="566"/>
        <end position="568"/>
    </location>
</feature>
<feature type="helix" evidence="10">
    <location>
        <begin position="571"/>
        <end position="574"/>
    </location>
</feature>
<feature type="strand" evidence="10">
    <location>
        <begin position="577"/>
        <end position="581"/>
    </location>
</feature>
<feature type="strand" evidence="10">
    <location>
        <begin position="589"/>
        <end position="592"/>
    </location>
</feature>
<feature type="turn" evidence="10">
    <location>
        <begin position="593"/>
        <end position="597"/>
    </location>
</feature>
<feature type="strand" evidence="10">
    <location>
        <begin position="598"/>
        <end position="602"/>
    </location>
</feature>
<feature type="helix" evidence="10">
    <location>
        <begin position="605"/>
        <end position="610"/>
    </location>
</feature>
<feature type="turn" evidence="10">
    <location>
        <begin position="611"/>
        <end position="616"/>
    </location>
</feature>
<feature type="helix" evidence="10">
    <location>
        <begin position="618"/>
        <end position="621"/>
    </location>
</feature>
<feature type="helix" evidence="10">
    <location>
        <begin position="627"/>
        <end position="629"/>
    </location>
</feature>
<feature type="helix" evidence="10">
    <location>
        <begin position="633"/>
        <end position="636"/>
    </location>
</feature>
<feature type="turn" evidence="10">
    <location>
        <begin position="641"/>
        <end position="645"/>
    </location>
</feature>
<feature type="helix" evidence="10">
    <location>
        <begin position="646"/>
        <end position="653"/>
    </location>
</feature>
<feature type="strand" evidence="10">
    <location>
        <begin position="658"/>
        <end position="665"/>
    </location>
</feature>
<feature type="helix" evidence="10">
    <location>
        <begin position="666"/>
        <end position="669"/>
    </location>
</feature>
<feature type="helix" evidence="10">
    <location>
        <begin position="674"/>
        <end position="681"/>
    </location>
</feature>
<feature type="turn" evidence="10">
    <location>
        <begin position="682"/>
        <end position="687"/>
    </location>
</feature>
<feature type="strand" evidence="10">
    <location>
        <begin position="691"/>
        <end position="693"/>
    </location>
</feature>
<feature type="helix" evidence="10">
    <location>
        <begin position="697"/>
        <end position="701"/>
    </location>
</feature>
<feature type="strand" evidence="10">
    <location>
        <begin position="707"/>
        <end position="710"/>
    </location>
</feature>
<feature type="strand" evidence="10">
    <location>
        <begin position="713"/>
        <end position="717"/>
    </location>
</feature>
<feature type="helix" evidence="10">
    <location>
        <begin position="720"/>
        <end position="724"/>
    </location>
</feature>
<feature type="strand" evidence="10">
    <location>
        <begin position="728"/>
        <end position="730"/>
    </location>
</feature>
<feature type="turn" evidence="10">
    <location>
        <begin position="731"/>
        <end position="733"/>
    </location>
</feature>
<feature type="helix" evidence="10">
    <location>
        <begin position="734"/>
        <end position="737"/>
    </location>
</feature>
<organism>
    <name type="scientific">Mus musculus</name>
    <name type="common">Mouse</name>
    <dbReference type="NCBI Taxonomy" id="10090"/>
    <lineage>
        <taxon>Eukaryota</taxon>
        <taxon>Metazoa</taxon>
        <taxon>Chordata</taxon>
        <taxon>Craniata</taxon>
        <taxon>Vertebrata</taxon>
        <taxon>Euteleostomi</taxon>
        <taxon>Mammalia</taxon>
        <taxon>Eutheria</taxon>
        <taxon>Euarchontoglires</taxon>
        <taxon>Glires</taxon>
        <taxon>Rodentia</taxon>
        <taxon>Myomorpha</taxon>
        <taxon>Muroidea</taxon>
        <taxon>Muridae</taxon>
        <taxon>Murinae</taxon>
        <taxon>Mus</taxon>
        <taxon>Mus</taxon>
    </lineage>
</organism>
<protein>
    <recommendedName>
        <fullName evidence="1">ABC-type oligopeptide transporter ABCB9</fullName>
        <ecNumber evidence="1">7.4.2.6</ecNumber>
    </recommendedName>
    <alternativeName>
        <fullName>ATP-binding cassette sub-family B member 9</fullName>
    </alternativeName>
    <alternativeName>
        <fullName>ATP-binding cassette transporter 9</fullName>
        <shortName>ABC transporter 9 protein</shortName>
        <shortName>mABCB9</shortName>
    </alternativeName>
    <alternativeName>
        <fullName evidence="5">TAP-like protein</fullName>
        <shortName evidence="5">TAPL</shortName>
    </alternativeName>
</protein>
<gene>
    <name evidence="9" type="primary">Abcb9</name>
    <name evidence="6" type="synonym">Kiaa1520</name>
</gene>
<keyword id="KW-0002">3D-structure</keyword>
<keyword id="KW-0025">Alternative splicing</keyword>
<keyword id="KW-0067">ATP-binding</keyword>
<keyword id="KW-0458">Lysosome</keyword>
<keyword id="KW-0472">Membrane</keyword>
<keyword id="KW-0547">Nucleotide-binding</keyword>
<keyword id="KW-0571">Peptide transport</keyword>
<keyword id="KW-0653">Protein transport</keyword>
<keyword id="KW-1185">Reference proteome</keyword>
<keyword id="KW-1278">Translocase</keyword>
<keyword id="KW-0812">Transmembrane</keyword>
<keyword id="KW-1133">Transmembrane helix</keyword>
<keyword id="KW-0813">Transport</keyword>
<dbReference type="EC" id="7.4.2.6" evidence="1"/>
<dbReference type="EMBL" id="AB045382">
    <property type="protein sequence ID" value="BAA97990.2"/>
    <property type="molecule type" value="mRNA"/>
</dbReference>
<dbReference type="EMBL" id="AF216495">
    <property type="protein sequence ID" value="AAF89994.1"/>
    <property type="molecule type" value="mRNA"/>
</dbReference>
<dbReference type="EMBL" id="AB093298">
    <property type="protein sequence ID" value="BAC41480.1"/>
    <property type="status" value="ALT_INIT"/>
    <property type="molecule type" value="mRNA"/>
</dbReference>
<dbReference type="EMBL" id="AK020749">
    <property type="status" value="NOT_ANNOTATED_CDS"/>
    <property type="molecule type" value="mRNA"/>
</dbReference>
<dbReference type="EMBL" id="AK044140">
    <property type="protein sequence ID" value="BAC31796.1"/>
    <property type="molecule type" value="mRNA"/>
</dbReference>
<dbReference type="EMBL" id="BC053014">
    <property type="protein sequence ID" value="AAH53014.1"/>
    <property type="molecule type" value="mRNA"/>
</dbReference>
<dbReference type="CCDS" id="CCDS19671.1">
    <molecule id="Q9JJ59-1"/>
</dbReference>
<dbReference type="RefSeq" id="NP_063928.2">
    <molecule id="Q9JJ59-1"/>
    <property type="nucleotide sequence ID" value="NM_019875.2"/>
</dbReference>
<dbReference type="PDB" id="7V5C">
    <property type="method" value="EM"/>
    <property type="resolution" value="3.20 A"/>
    <property type="chains" value="A/B=1-762"/>
</dbReference>
<dbReference type="PDB" id="7V5D">
    <property type="method" value="EM"/>
    <property type="resolution" value="3.40 A"/>
    <property type="chains" value="A/B=1-762"/>
</dbReference>
<dbReference type="PDB" id="7VFI">
    <property type="method" value="EM"/>
    <property type="resolution" value="3.98 A"/>
    <property type="chains" value="A/B=1-762"/>
</dbReference>
<dbReference type="PDBsum" id="7V5C"/>
<dbReference type="PDBsum" id="7V5D"/>
<dbReference type="PDBsum" id="7VFI"/>
<dbReference type="EMDB" id="EMD-31722"/>
<dbReference type="EMDB" id="EMD-31723"/>
<dbReference type="EMDB" id="EMD-31955"/>
<dbReference type="SMR" id="Q9JJ59"/>
<dbReference type="FunCoup" id="Q9JJ59">
    <property type="interactions" value="450"/>
</dbReference>
<dbReference type="STRING" id="10090.ENSMUSP00000031354"/>
<dbReference type="GlyGen" id="Q9JJ59">
    <property type="glycosylation" value="2 sites, 1 N-linked glycan (2 sites)"/>
</dbReference>
<dbReference type="iPTMnet" id="Q9JJ59"/>
<dbReference type="PhosphoSitePlus" id="Q9JJ59"/>
<dbReference type="jPOST" id="Q9JJ59"/>
<dbReference type="PaxDb" id="10090-ENSMUSP00000031354"/>
<dbReference type="PeptideAtlas" id="Q9JJ59"/>
<dbReference type="ProteomicsDB" id="285902">
    <molecule id="Q9JJ59-1"/>
</dbReference>
<dbReference type="ProteomicsDB" id="285903">
    <molecule id="Q9JJ59-2"/>
</dbReference>
<dbReference type="Antibodypedia" id="31719">
    <property type="antibodies" value="245 antibodies from 29 providers"/>
</dbReference>
<dbReference type="DNASU" id="56325"/>
<dbReference type="Ensembl" id="ENSMUST00000031354.11">
    <molecule id="Q9JJ59-1"/>
    <property type="protein sequence ID" value="ENSMUSP00000031354.5"/>
    <property type="gene ID" value="ENSMUSG00000029408.14"/>
</dbReference>
<dbReference type="GeneID" id="56325"/>
<dbReference type="KEGG" id="mmu:56325"/>
<dbReference type="UCSC" id="uc008zou.1">
    <molecule id="Q9JJ59-1"/>
    <property type="organism name" value="mouse"/>
</dbReference>
<dbReference type="AGR" id="MGI:1861729"/>
<dbReference type="CTD" id="23457"/>
<dbReference type="MGI" id="MGI:1861729">
    <property type="gene designation" value="Abcb9"/>
</dbReference>
<dbReference type="VEuPathDB" id="HostDB:ENSMUSG00000029408"/>
<dbReference type="eggNOG" id="KOG0058">
    <property type="taxonomic scope" value="Eukaryota"/>
</dbReference>
<dbReference type="GeneTree" id="ENSGT00940000155431"/>
<dbReference type="HOGENOM" id="CLU_000604_84_3_1"/>
<dbReference type="InParanoid" id="Q9JJ59"/>
<dbReference type="OMA" id="CRLYEPQ"/>
<dbReference type="OrthoDB" id="6500128at2759"/>
<dbReference type="PhylomeDB" id="Q9JJ59"/>
<dbReference type="TreeFam" id="TF105197"/>
<dbReference type="Reactome" id="R-MMU-382556">
    <property type="pathway name" value="ABC-family proteins mediated transport"/>
</dbReference>
<dbReference type="BioGRID-ORCS" id="56325">
    <property type="hits" value="3 hits in 80 CRISPR screens"/>
</dbReference>
<dbReference type="ChiTaRS" id="Abcb9">
    <property type="organism name" value="mouse"/>
</dbReference>
<dbReference type="PRO" id="PR:Q9JJ59"/>
<dbReference type="Proteomes" id="UP000000589">
    <property type="component" value="Chromosome 5"/>
</dbReference>
<dbReference type="RNAct" id="Q9JJ59">
    <property type="molecule type" value="protein"/>
</dbReference>
<dbReference type="Bgee" id="ENSMUSG00000029408">
    <property type="expression patterns" value="Expressed in choroid plexus of fourth ventricle and 164 other cell types or tissues"/>
</dbReference>
<dbReference type="ExpressionAtlas" id="Q9JJ59">
    <property type="expression patterns" value="baseline and differential"/>
</dbReference>
<dbReference type="GO" id="GO:0005789">
    <property type="term" value="C:endoplasmic reticulum membrane"/>
    <property type="evidence" value="ECO:0000266"/>
    <property type="project" value="MGI"/>
</dbReference>
<dbReference type="GO" id="GO:0005765">
    <property type="term" value="C:lysosomal membrane"/>
    <property type="evidence" value="ECO:0000250"/>
    <property type="project" value="UniProtKB"/>
</dbReference>
<dbReference type="GO" id="GO:0005764">
    <property type="term" value="C:lysosome"/>
    <property type="evidence" value="ECO:0000250"/>
    <property type="project" value="UniProtKB"/>
</dbReference>
<dbReference type="GO" id="GO:0015421">
    <property type="term" value="F:ABC-type oligopeptide transporter activity"/>
    <property type="evidence" value="ECO:0000250"/>
    <property type="project" value="UniProtKB"/>
</dbReference>
<dbReference type="GO" id="GO:0015440">
    <property type="term" value="F:ABC-type peptide transporter activity"/>
    <property type="evidence" value="ECO:0007669"/>
    <property type="project" value="Ensembl"/>
</dbReference>
<dbReference type="GO" id="GO:0005524">
    <property type="term" value="F:ATP binding"/>
    <property type="evidence" value="ECO:0007669"/>
    <property type="project" value="UniProtKB-KW"/>
</dbReference>
<dbReference type="GO" id="GO:0016887">
    <property type="term" value="F:ATP hydrolysis activity"/>
    <property type="evidence" value="ECO:0007669"/>
    <property type="project" value="InterPro"/>
</dbReference>
<dbReference type="GO" id="GO:0042803">
    <property type="term" value="F:protein homodimerization activity"/>
    <property type="evidence" value="ECO:0007669"/>
    <property type="project" value="Ensembl"/>
</dbReference>
<dbReference type="GO" id="GO:0006518">
    <property type="term" value="P:peptide metabolic process"/>
    <property type="evidence" value="ECO:0000250"/>
    <property type="project" value="UniProtKB"/>
</dbReference>
<dbReference type="GO" id="GO:0015833">
    <property type="term" value="P:peptide transport"/>
    <property type="evidence" value="ECO:0000250"/>
    <property type="project" value="UniProtKB"/>
</dbReference>
<dbReference type="GO" id="GO:0015031">
    <property type="term" value="P:protein transport"/>
    <property type="evidence" value="ECO:0007669"/>
    <property type="project" value="UniProtKB-KW"/>
</dbReference>
<dbReference type="CDD" id="cd18784">
    <property type="entry name" value="ABC_6TM_ABCB9_like"/>
    <property type="match status" value="1"/>
</dbReference>
<dbReference type="CDD" id="cd03248">
    <property type="entry name" value="ABCC_TAP"/>
    <property type="match status" value="1"/>
</dbReference>
<dbReference type="FunFam" id="1.20.1560.10:FF:000031">
    <property type="entry name" value="ATP-binding cassette sub-family B member 9"/>
    <property type="match status" value="1"/>
</dbReference>
<dbReference type="FunFam" id="3.40.50.300:FF:000140">
    <property type="entry name" value="Lipid A export ATP-binding/permease protein MsbA"/>
    <property type="match status" value="1"/>
</dbReference>
<dbReference type="Gene3D" id="1.20.1560.10">
    <property type="entry name" value="ABC transporter type 1, transmembrane domain"/>
    <property type="match status" value="1"/>
</dbReference>
<dbReference type="Gene3D" id="3.40.50.300">
    <property type="entry name" value="P-loop containing nucleotide triphosphate hydrolases"/>
    <property type="match status" value="1"/>
</dbReference>
<dbReference type="InterPro" id="IPR003593">
    <property type="entry name" value="AAA+_ATPase"/>
</dbReference>
<dbReference type="InterPro" id="IPR011527">
    <property type="entry name" value="ABC1_TM_dom"/>
</dbReference>
<dbReference type="InterPro" id="IPR036640">
    <property type="entry name" value="ABC1_TM_sf"/>
</dbReference>
<dbReference type="InterPro" id="IPR003439">
    <property type="entry name" value="ABC_transporter-like_ATP-bd"/>
</dbReference>
<dbReference type="InterPro" id="IPR017871">
    <property type="entry name" value="ABC_transporter-like_CS"/>
</dbReference>
<dbReference type="InterPro" id="IPR030254">
    <property type="entry name" value="ABCB9_6-TMD"/>
</dbReference>
<dbReference type="InterPro" id="IPR027417">
    <property type="entry name" value="P-loop_NTPase"/>
</dbReference>
<dbReference type="InterPro" id="IPR039421">
    <property type="entry name" value="Type_1_exporter"/>
</dbReference>
<dbReference type="PANTHER" id="PTHR43394:SF21">
    <property type="entry name" value="ATP BINDING CASSETTE SUBFAMILY B MEMBER 9"/>
    <property type="match status" value="1"/>
</dbReference>
<dbReference type="PANTHER" id="PTHR43394">
    <property type="entry name" value="ATP-DEPENDENT PERMEASE MDL1, MITOCHONDRIAL"/>
    <property type="match status" value="1"/>
</dbReference>
<dbReference type="Pfam" id="PF00664">
    <property type="entry name" value="ABC_membrane"/>
    <property type="match status" value="1"/>
</dbReference>
<dbReference type="Pfam" id="PF00005">
    <property type="entry name" value="ABC_tran"/>
    <property type="match status" value="1"/>
</dbReference>
<dbReference type="PIRSF" id="PIRSF002773">
    <property type="entry name" value="ABC_prm/ATPase_B"/>
    <property type="match status" value="1"/>
</dbReference>
<dbReference type="PRINTS" id="PR01896">
    <property type="entry name" value="TAP1PROTEIN"/>
</dbReference>
<dbReference type="SMART" id="SM00382">
    <property type="entry name" value="AAA"/>
    <property type="match status" value="1"/>
</dbReference>
<dbReference type="SUPFAM" id="SSF90123">
    <property type="entry name" value="ABC transporter transmembrane region"/>
    <property type="match status" value="1"/>
</dbReference>
<dbReference type="SUPFAM" id="SSF52540">
    <property type="entry name" value="P-loop containing nucleoside triphosphate hydrolases"/>
    <property type="match status" value="1"/>
</dbReference>
<dbReference type="PROSITE" id="PS50929">
    <property type="entry name" value="ABC_TM1F"/>
    <property type="match status" value="1"/>
</dbReference>
<dbReference type="PROSITE" id="PS00211">
    <property type="entry name" value="ABC_TRANSPORTER_1"/>
    <property type="match status" value="1"/>
</dbReference>
<dbReference type="PROSITE" id="PS50893">
    <property type="entry name" value="ABC_TRANSPORTER_2"/>
    <property type="match status" value="1"/>
</dbReference>
<accession>Q9JJ59</accession>
<accession>Q8CHA1</accession>
<accession>Q9D212</accession>
<accession>Q9JIN1</accession>
<comment type="function">
    <text evidence="1">ATP-dependent low-affinity peptide transporter which translocates a broad spectrum of peptides from the cytosol to the lysosomal lumen for degradation. Displays a broad peptide length specificity from 6-mer up to at least 59-mer peptides with an optimum of 23-mers. Binds and transports smaller and larger peptides with the same affinity. Favors positively charged, aromatic or hydrophobic residues in the N- and C-terminal positions whereas negatively charged residues as well as asparagine and methionine are not favored.</text>
</comment>
<comment type="catalytic activity">
    <reaction evidence="1">
        <text>a [oligopeptide](in) + ATP + H2O = a [oligopeptide](out) + ADP + phosphate + H(+)</text>
        <dbReference type="Rhea" id="RHEA:14429"/>
        <dbReference type="Rhea" id="RHEA-COMP:10531"/>
        <dbReference type="ChEBI" id="CHEBI:15377"/>
        <dbReference type="ChEBI" id="CHEBI:15378"/>
        <dbReference type="ChEBI" id="CHEBI:30616"/>
        <dbReference type="ChEBI" id="CHEBI:43474"/>
        <dbReference type="ChEBI" id="CHEBI:83228"/>
        <dbReference type="ChEBI" id="CHEBI:456216"/>
        <dbReference type="EC" id="7.4.2.6"/>
    </reaction>
    <physiologicalReaction direction="left-to-right" evidence="1">
        <dbReference type="Rhea" id="RHEA:14430"/>
    </physiologicalReaction>
</comment>
<comment type="subunit">
    <text evidence="1">Homodimer. Interacts (via TMD0 region) with LAMP1; this interaction strongly stabilizes ABCB9 and protects ABCB9 against lysosomal degradation. Interacts (via TMD0 region) with LAMP2 (isoform LAMP-2B). Interacts (via TMD0) with YIF1B; this interaction allows (but is not essential) the ER-to-Golgi trafficking and strongly depends on a salt bridge within TMD0.</text>
</comment>
<comment type="subcellular location">
    <subcellularLocation>
        <location evidence="1">Lysosome membrane</location>
        <topology evidence="1 3">Multi-pass membrane protein</topology>
    </subcellularLocation>
    <text evidence="1">May be located in membrane rafts. Takes an intracellular route from the endoplasmic reticulum (ER), via Golgi and early endosomes to late endosomal and lysosomal compartments.</text>
</comment>
<comment type="alternative products">
    <event type="alternative splicing"/>
    <isoform>
        <id>Q9JJ59-1</id>
        <name>1</name>
        <sequence type="displayed"/>
    </isoform>
    <isoform>
        <id>Q9JJ59-2</id>
        <name>2</name>
        <sequence type="described" ref="VSP_000032 VSP_000033"/>
    </isoform>
</comment>
<comment type="tissue specificity">
    <text evidence="4">Highly expressed in testis, particularly in the Sertoli cells of the seminiferous tubules, and at moderate levels in brain and spinal cord.</text>
</comment>
<comment type="domain">
    <text evidence="1">Divided into an N-terminal domain (TMD0) comprising four transmembrane helices and the following core domain (coreABCB9). TMD0 is required for lysosomal localization and LAMP1, LAMP2 and YIF1B interaction. The core domain is required for homodimerization and peptide transport activity.</text>
</comment>
<comment type="similarity">
    <text evidence="8">Belongs to the ABC transporter superfamily. ABCB family. MHC peptide exporter (TC 3.A.1.209) subfamily.</text>
</comment>
<comment type="sequence caution" evidence="8">
    <conflict type="erroneous initiation">
        <sequence resource="EMBL-CDS" id="BAC41480"/>
    </conflict>
    <text>Extended N-terminus.</text>
</comment>
<reference key="1">
    <citation type="journal article" date="2000" name="J. Biochem.">
        <title>A half-type ABC transporter TAPL is highly conserved between rodent and man, and the human gene is not responsive to interferon-gamma in contrast to TAP1 and TAP2.</title>
        <authorList>
            <person name="Kobayashi A."/>
            <person name="Kasano M."/>
            <person name="Maeda T."/>
            <person name="Hori S."/>
            <person name="Motojima K."/>
            <person name="Suzuki M."/>
            <person name="Fujiwara T."/>
            <person name="Takahashi E."/>
            <person name="Yabe T."/>
            <person name="Tanaka K."/>
            <person name="Kasahara M."/>
            <person name="Yamaguchi Y."/>
            <person name="Maeda M."/>
        </authorList>
    </citation>
    <scope>NUCLEOTIDE SEQUENCE [MRNA] (ISOFORM 1)</scope>
    <source>
        <tissue>Testis</tissue>
    </source>
</reference>
<reference key="2">
    <citation type="journal article" date="2000" name="J. Biol. Chem.">
        <title>Characterization of ABCB9, an ATP binding cassette protein associated with lysosomes.</title>
        <authorList>
            <person name="Zhang F."/>
            <person name="Zhang W."/>
            <person name="Liu L."/>
            <person name="Fisher C.L."/>
            <person name="Hui D."/>
            <person name="Childs S."/>
            <person name="Dorovini-Zis K."/>
            <person name="Ling V."/>
        </authorList>
    </citation>
    <scope>NUCLEOTIDE SEQUENCE [MRNA] (ISOFORM 1)</scope>
    <scope>TISSUE SPECIFICITY</scope>
    <source>
        <tissue>Brain</tissue>
    </source>
</reference>
<reference key="3">
    <citation type="journal article" date="2002" name="DNA Res.">
        <title>Prediction of the coding sequences of mouse homologues of KIAA gene: I. The complete nucleotide sequences of 100 mouse KIAA-homologous cDNAs identified by screening of terminal sequences of cDNA clones randomly sampled from size-fractionated libraries.</title>
        <authorList>
            <person name="Okazaki N."/>
            <person name="Kikuno R."/>
            <person name="Ohara R."/>
            <person name="Inamoto S."/>
            <person name="Hara Y."/>
            <person name="Nagase T."/>
            <person name="Ohara O."/>
            <person name="Koga H."/>
        </authorList>
    </citation>
    <scope>NUCLEOTIDE SEQUENCE [LARGE SCALE MRNA] (ISOFORM 1)</scope>
    <source>
        <tissue>Brain</tissue>
    </source>
</reference>
<reference key="4">
    <citation type="journal article" date="2005" name="Science">
        <title>The transcriptional landscape of the mammalian genome.</title>
        <authorList>
            <person name="Carninci P."/>
            <person name="Kasukawa T."/>
            <person name="Katayama S."/>
            <person name="Gough J."/>
            <person name="Frith M.C."/>
            <person name="Maeda N."/>
            <person name="Oyama R."/>
            <person name="Ravasi T."/>
            <person name="Lenhard B."/>
            <person name="Wells C."/>
            <person name="Kodzius R."/>
            <person name="Shimokawa K."/>
            <person name="Bajic V.B."/>
            <person name="Brenner S.E."/>
            <person name="Batalov S."/>
            <person name="Forrest A.R."/>
            <person name="Zavolan M."/>
            <person name="Davis M.J."/>
            <person name="Wilming L.G."/>
            <person name="Aidinis V."/>
            <person name="Allen J.E."/>
            <person name="Ambesi-Impiombato A."/>
            <person name="Apweiler R."/>
            <person name="Aturaliya R.N."/>
            <person name="Bailey T.L."/>
            <person name="Bansal M."/>
            <person name="Baxter L."/>
            <person name="Beisel K.W."/>
            <person name="Bersano T."/>
            <person name="Bono H."/>
            <person name="Chalk A.M."/>
            <person name="Chiu K.P."/>
            <person name="Choudhary V."/>
            <person name="Christoffels A."/>
            <person name="Clutterbuck D.R."/>
            <person name="Crowe M.L."/>
            <person name="Dalla E."/>
            <person name="Dalrymple B.P."/>
            <person name="de Bono B."/>
            <person name="Della Gatta G."/>
            <person name="di Bernardo D."/>
            <person name="Down T."/>
            <person name="Engstrom P."/>
            <person name="Fagiolini M."/>
            <person name="Faulkner G."/>
            <person name="Fletcher C.F."/>
            <person name="Fukushima T."/>
            <person name="Furuno M."/>
            <person name="Futaki S."/>
            <person name="Gariboldi M."/>
            <person name="Georgii-Hemming P."/>
            <person name="Gingeras T.R."/>
            <person name="Gojobori T."/>
            <person name="Green R.E."/>
            <person name="Gustincich S."/>
            <person name="Harbers M."/>
            <person name="Hayashi Y."/>
            <person name="Hensch T.K."/>
            <person name="Hirokawa N."/>
            <person name="Hill D."/>
            <person name="Huminiecki L."/>
            <person name="Iacono M."/>
            <person name="Ikeo K."/>
            <person name="Iwama A."/>
            <person name="Ishikawa T."/>
            <person name="Jakt M."/>
            <person name="Kanapin A."/>
            <person name="Katoh M."/>
            <person name="Kawasawa Y."/>
            <person name="Kelso J."/>
            <person name="Kitamura H."/>
            <person name="Kitano H."/>
            <person name="Kollias G."/>
            <person name="Krishnan S.P."/>
            <person name="Kruger A."/>
            <person name="Kummerfeld S.K."/>
            <person name="Kurochkin I.V."/>
            <person name="Lareau L.F."/>
            <person name="Lazarevic D."/>
            <person name="Lipovich L."/>
            <person name="Liu J."/>
            <person name="Liuni S."/>
            <person name="McWilliam S."/>
            <person name="Madan Babu M."/>
            <person name="Madera M."/>
            <person name="Marchionni L."/>
            <person name="Matsuda H."/>
            <person name="Matsuzawa S."/>
            <person name="Miki H."/>
            <person name="Mignone F."/>
            <person name="Miyake S."/>
            <person name="Morris K."/>
            <person name="Mottagui-Tabar S."/>
            <person name="Mulder N."/>
            <person name="Nakano N."/>
            <person name="Nakauchi H."/>
            <person name="Ng P."/>
            <person name="Nilsson R."/>
            <person name="Nishiguchi S."/>
            <person name="Nishikawa S."/>
            <person name="Nori F."/>
            <person name="Ohara O."/>
            <person name="Okazaki Y."/>
            <person name="Orlando V."/>
            <person name="Pang K.C."/>
            <person name="Pavan W.J."/>
            <person name="Pavesi G."/>
            <person name="Pesole G."/>
            <person name="Petrovsky N."/>
            <person name="Piazza S."/>
            <person name="Reed J."/>
            <person name="Reid J.F."/>
            <person name="Ring B.Z."/>
            <person name="Ringwald M."/>
            <person name="Rost B."/>
            <person name="Ruan Y."/>
            <person name="Salzberg S.L."/>
            <person name="Sandelin A."/>
            <person name="Schneider C."/>
            <person name="Schoenbach C."/>
            <person name="Sekiguchi K."/>
            <person name="Semple C.A."/>
            <person name="Seno S."/>
            <person name="Sessa L."/>
            <person name="Sheng Y."/>
            <person name="Shibata Y."/>
            <person name="Shimada H."/>
            <person name="Shimada K."/>
            <person name="Silva D."/>
            <person name="Sinclair B."/>
            <person name="Sperling S."/>
            <person name="Stupka E."/>
            <person name="Sugiura K."/>
            <person name="Sultana R."/>
            <person name="Takenaka Y."/>
            <person name="Taki K."/>
            <person name="Tammoja K."/>
            <person name="Tan S.L."/>
            <person name="Tang S."/>
            <person name="Taylor M.S."/>
            <person name="Tegner J."/>
            <person name="Teichmann S.A."/>
            <person name="Ueda H.R."/>
            <person name="van Nimwegen E."/>
            <person name="Verardo R."/>
            <person name="Wei C.L."/>
            <person name="Yagi K."/>
            <person name="Yamanishi H."/>
            <person name="Zabarovsky E."/>
            <person name="Zhu S."/>
            <person name="Zimmer A."/>
            <person name="Hide W."/>
            <person name="Bult C."/>
            <person name="Grimmond S.M."/>
            <person name="Teasdale R.D."/>
            <person name="Liu E.T."/>
            <person name="Brusic V."/>
            <person name="Quackenbush J."/>
            <person name="Wahlestedt C."/>
            <person name="Mattick J.S."/>
            <person name="Hume D.A."/>
            <person name="Kai C."/>
            <person name="Sasaki D."/>
            <person name="Tomaru Y."/>
            <person name="Fukuda S."/>
            <person name="Kanamori-Katayama M."/>
            <person name="Suzuki M."/>
            <person name="Aoki J."/>
            <person name="Arakawa T."/>
            <person name="Iida J."/>
            <person name="Imamura K."/>
            <person name="Itoh M."/>
            <person name="Kato T."/>
            <person name="Kawaji H."/>
            <person name="Kawagashira N."/>
            <person name="Kawashima T."/>
            <person name="Kojima M."/>
            <person name="Kondo S."/>
            <person name="Konno H."/>
            <person name="Nakano K."/>
            <person name="Ninomiya N."/>
            <person name="Nishio T."/>
            <person name="Okada M."/>
            <person name="Plessy C."/>
            <person name="Shibata K."/>
            <person name="Shiraki T."/>
            <person name="Suzuki S."/>
            <person name="Tagami M."/>
            <person name="Waki K."/>
            <person name="Watahiki A."/>
            <person name="Okamura-Oho Y."/>
            <person name="Suzuki H."/>
            <person name="Kawai J."/>
            <person name="Hayashizaki Y."/>
        </authorList>
    </citation>
    <scope>NUCLEOTIDE SEQUENCE [LARGE SCALE MRNA] (ISOFORM 1)</scope>
    <scope>NUCLEOTIDE SEQUENCE [LARGE SCALE MRNA] OF 414-762 (ISOFORM 2)</scope>
    <source>
        <strain>C57BL/6J</strain>
        <tissue>Brain cortex</tissue>
        <tissue>Thymus</tissue>
    </source>
</reference>
<reference key="5">
    <citation type="journal article" date="2004" name="Genome Res.">
        <title>The status, quality, and expansion of the NIH full-length cDNA project: the Mammalian Gene Collection (MGC).</title>
        <authorList>
            <consortium name="The MGC Project Team"/>
        </authorList>
    </citation>
    <scope>NUCLEOTIDE SEQUENCE [LARGE SCALE MRNA] (ISOFORM 1)</scope>
    <source>
        <strain>C57BL/6J</strain>
        <tissue>Brain</tissue>
    </source>
</reference>
<evidence type="ECO:0000250" key="1">
    <source>
        <dbReference type="UniProtKB" id="Q9NP78"/>
    </source>
</evidence>
<evidence type="ECO:0000255" key="2">
    <source>
        <dbReference type="PROSITE-ProRule" id="PRU00434"/>
    </source>
</evidence>
<evidence type="ECO:0000255" key="3">
    <source>
        <dbReference type="PROSITE-ProRule" id="PRU00441"/>
    </source>
</evidence>
<evidence type="ECO:0000269" key="4">
    <source>
    </source>
</evidence>
<evidence type="ECO:0000303" key="5">
    <source>
    </source>
</evidence>
<evidence type="ECO:0000303" key="6">
    <source>
    </source>
</evidence>
<evidence type="ECO:0000303" key="7">
    <source>
    </source>
</evidence>
<evidence type="ECO:0000305" key="8"/>
<evidence type="ECO:0000312" key="9">
    <source>
        <dbReference type="MGI" id="MGI:1861729"/>
    </source>
</evidence>
<evidence type="ECO:0007829" key="10">
    <source>
        <dbReference type="PDB" id="7V5C"/>
    </source>
</evidence>
<evidence type="ECO:0007829" key="11">
    <source>
        <dbReference type="PDB" id="7V5D"/>
    </source>
</evidence>
<name>ABCB9_MOUSE</name>
<sequence>MRLWKAVVVTLAFVSTDVGVTTAIYAFSHLDRSLLEDIRHFNIFDSVLDLWAACLYRSCLLLGATIGVAKNSALGPRRLRASWLVITLVCLFVGIYAMAKLLLFSEVRRPIRDPWFWALFVWTYISLAASFLLWGLLATVRPDAEALEPGNEGFHGEGGAPAEQASGATLQKLLSYTKPDVAFLVAASFFLIVAALGETFLPYYTGRAIDSIVIQKSMDQFTTAVVVVCLLAIGSSLAAGIRGGIFTLVFARLNIRLRNCLFRSLVSQETSFFDENRTGDLISRLTSDTTMVSDLVSQNINIFLRNTVKVTGVVVFMFSLSWQLSLVTFMGFPIIMMVSNIYGKYYKRLSKEVQSALARASTTAEETISAMKTVRSFANEEEEAEVFLRKLQQVYKLNRKEAAAYMSYVWGSGLTLLVVQVSILYYGGHLVISGQMSSGNLIAFIIYEFVLGDCMESVGSVYSGLMQGVGAAEKVFEFIDRQPTMVHDGSLAPDHLEGRVDFENVTFTYRTRPHTQVLQNVSFSLSPGKVTALVGPSGSGKSSCVNILENFYPLQGGRVLLDGKPIGAYDHKYLHRVISLVSQEPVLFARSITDNISYGLPTVPFEMVVEAAQKANAHGFIMELQDGYSTETGEKGAQLSGGQKQRVAMARALVRNPPVLILDEATSALDAESEYLIQQAIHGNLQRHTVLIIAHRLSTVERAHLIVVLDKGRVVQQGTHQQLLAQGGLYAKLVQRQMLGLEHPLDYTASHKEPPSNTEHKA</sequence>
<proteinExistence type="evidence at protein level"/>